<feature type="chain" id="PRO_0000158023" description="Protein-glutamate methylesterase/protein-glutamine glutaminase of group 3 operon">
    <location>
        <begin position="1"/>
        <end position="363"/>
    </location>
</feature>
<feature type="domain" description="Response regulatory" evidence="1">
    <location>
        <begin position="7"/>
        <end position="124"/>
    </location>
</feature>
<feature type="domain" description="CheB-type methylesterase" evidence="1">
    <location>
        <begin position="166"/>
        <end position="357"/>
    </location>
</feature>
<feature type="active site" evidence="1">
    <location>
        <position position="177"/>
    </location>
</feature>
<feature type="active site" evidence="1">
    <location>
        <position position="203"/>
    </location>
</feature>
<feature type="active site" evidence="1">
    <location>
        <position position="299"/>
    </location>
</feature>
<feature type="modified residue" description="4-aspartylphosphate" evidence="1">
    <location>
        <position position="58"/>
    </location>
</feature>
<protein>
    <recommendedName>
        <fullName>Protein-glutamate methylesterase/protein-glutamine glutaminase of group 3 operon</fullName>
        <ecNumber evidence="1">3.1.1.61</ecNumber>
        <ecNumber evidence="1">3.5.1.44</ecNumber>
    </recommendedName>
</protein>
<comment type="function">
    <text evidence="1">Involved in chemotaxis. Part of a chemotaxis signal transduction system that modulates chemotaxis in response to various stimuli. Catalyzes the demethylation of specific methylglutamate residues introduced into the chemoreceptors (methyl-accepting chemotaxis proteins or MCP) by CheR. Also mediates the irreversible deamidation of specific glutamine residues to glutamic acid.</text>
</comment>
<comment type="catalytic activity">
    <reaction evidence="1">
        <text>[protein]-L-glutamate 5-O-methyl ester + H2O = L-glutamyl-[protein] + methanol + H(+)</text>
        <dbReference type="Rhea" id="RHEA:23236"/>
        <dbReference type="Rhea" id="RHEA-COMP:10208"/>
        <dbReference type="Rhea" id="RHEA-COMP:10311"/>
        <dbReference type="ChEBI" id="CHEBI:15377"/>
        <dbReference type="ChEBI" id="CHEBI:15378"/>
        <dbReference type="ChEBI" id="CHEBI:17790"/>
        <dbReference type="ChEBI" id="CHEBI:29973"/>
        <dbReference type="ChEBI" id="CHEBI:82795"/>
        <dbReference type="EC" id="3.1.1.61"/>
    </reaction>
</comment>
<comment type="catalytic activity">
    <reaction evidence="1">
        <text>L-glutaminyl-[protein] + H2O = L-glutamyl-[protein] + NH4(+)</text>
        <dbReference type="Rhea" id="RHEA:16441"/>
        <dbReference type="Rhea" id="RHEA-COMP:10207"/>
        <dbReference type="Rhea" id="RHEA-COMP:10208"/>
        <dbReference type="ChEBI" id="CHEBI:15377"/>
        <dbReference type="ChEBI" id="CHEBI:28938"/>
        <dbReference type="ChEBI" id="CHEBI:29973"/>
        <dbReference type="ChEBI" id="CHEBI:30011"/>
        <dbReference type="EC" id="3.5.1.44"/>
    </reaction>
</comment>
<comment type="subcellular location">
    <subcellularLocation>
        <location evidence="1">Cytoplasm</location>
    </subcellularLocation>
</comment>
<comment type="domain">
    <text evidence="1">Contains a C-terminal catalytic domain, and an N-terminal region which modulates catalytic activity.</text>
</comment>
<comment type="PTM">
    <text evidence="1">Phosphorylated by CheA. Phosphorylation of the N-terminal regulatory domain activates the methylesterase activity.</text>
</comment>
<comment type="miscellaneous">
    <text>R.palustris does not have a group 1 operon.</text>
</comment>
<comment type="similarity">
    <text evidence="1">Belongs to the CheB family.</text>
</comment>
<sequence length="363" mass="39080">MAKQKIRVLIVDDSASVRQVLGTILAEDPEIEVIGTASDPFVAAKRLQNELPDVILLDIEMPRMDGITFLRKIMAQHPIPVVICSSLTPEGSDLMFEALEAGAVDIVPKPRVDTRQALMESSGRLREAIKSAARARVRPRAARKVIEQKLTADAIIPPPVAGRSRPTTERIVCIGVSTGGTEALYDVLEVLPPNCPGILIVQHMPQGFTAAFAKRLNAGCQINVKEAEDGDPVLPGWAYIAPGARHMLLVRSGLRYQIAIKDGPPVSRHRPSADVLFRSAAQYAGANALGIIMTGMGDDGARGLLEMRKLGAYTCAQDEESCVVFGMPKEAIACGAVEKVVSLNQIPREIMAWQQAKQPASAD</sequence>
<organism>
    <name type="scientific">Rhodopseudomonas palustris (strain ATCC BAA-98 / CGA009)</name>
    <dbReference type="NCBI Taxonomy" id="258594"/>
    <lineage>
        <taxon>Bacteria</taxon>
        <taxon>Pseudomonadati</taxon>
        <taxon>Pseudomonadota</taxon>
        <taxon>Alphaproteobacteria</taxon>
        <taxon>Hyphomicrobiales</taxon>
        <taxon>Nitrobacteraceae</taxon>
        <taxon>Rhodopseudomonas</taxon>
    </lineage>
</organism>
<evidence type="ECO:0000255" key="1">
    <source>
        <dbReference type="HAMAP-Rule" id="MF_00099"/>
    </source>
</evidence>
<dbReference type="EC" id="3.1.1.61" evidence="1"/>
<dbReference type="EC" id="3.5.1.44" evidence="1"/>
<dbReference type="EMBL" id="BX572593">
    <property type="protein sequence ID" value="CAE25581.1"/>
    <property type="molecule type" value="Genomic_DNA"/>
</dbReference>
<dbReference type="RefSeq" id="WP_011155705.1">
    <property type="nucleotide sequence ID" value="NZ_CP116810.1"/>
</dbReference>
<dbReference type="SMR" id="P62645"/>
<dbReference type="STRING" id="258594.RPA0137"/>
<dbReference type="GeneID" id="66891139"/>
<dbReference type="eggNOG" id="COG2201">
    <property type="taxonomic scope" value="Bacteria"/>
</dbReference>
<dbReference type="HOGENOM" id="CLU_000445_51_0_5"/>
<dbReference type="PhylomeDB" id="P62645"/>
<dbReference type="GO" id="GO:0005737">
    <property type="term" value="C:cytoplasm"/>
    <property type="evidence" value="ECO:0007669"/>
    <property type="project" value="UniProtKB-SubCell"/>
</dbReference>
<dbReference type="GO" id="GO:0000156">
    <property type="term" value="F:phosphorelay response regulator activity"/>
    <property type="evidence" value="ECO:0007669"/>
    <property type="project" value="InterPro"/>
</dbReference>
<dbReference type="GO" id="GO:0008984">
    <property type="term" value="F:protein-glutamate methylesterase activity"/>
    <property type="evidence" value="ECO:0007669"/>
    <property type="project" value="UniProtKB-UniRule"/>
</dbReference>
<dbReference type="GO" id="GO:0050568">
    <property type="term" value="F:protein-glutamine glutaminase activity"/>
    <property type="evidence" value="ECO:0007669"/>
    <property type="project" value="UniProtKB-UniRule"/>
</dbReference>
<dbReference type="GO" id="GO:0006935">
    <property type="term" value="P:chemotaxis"/>
    <property type="evidence" value="ECO:0007669"/>
    <property type="project" value="UniProtKB-UniRule"/>
</dbReference>
<dbReference type="CDD" id="cd16432">
    <property type="entry name" value="CheB_Rec"/>
    <property type="match status" value="1"/>
</dbReference>
<dbReference type="CDD" id="cd17541">
    <property type="entry name" value="REC_CheB-like"/>
    <property type="match status" value="1"/>
</dbReference>
<dbReference type="Gene3D" id="3.40.50.2300">
    <property type="match status" value="1"/>
</dbReference>
<dbReference type="Gene3D" id="3.40.50.180">
    <property type="entry name" value="Methylesterase CheB, C-terminal domain"/>
    <property type="match status" value="1"/>
</dbReference>
<dbReference type="HAMAP" id="MF_00099">
    <property type="entry name" value="CheB_chemtxs"/>
    <property type="match status" value="1"/>
</dbReference>
<dbReference type="InterPro" id="IPR008248">
    <property type="entry name" value="CheB-like"/>
</dbReference>
<dbReference type="InterPro" id="IPR035909">
    <property type="entry name" value="CheB_C"/>
</dbReference>
<dbReference type="InterPro" id="IPR011006">
    <property type="entry name" value="CheY-like_superfamily"/>
</dbReference>
<dbReference type="InterPro" id="IPR000673">
    <property type="entry name" value="Sig_transdc_resp-reg_Me-estase"/>
</dbReference>
<dbReference type="InterPro" id="IPR001789">
    <property type="entry name" value="Sig_transdc_resp-reg_receiver"/>
</dbReference>
<dbReference type="NCBIfam" id="NF001965">
    <property type="entry name" value="PRK00742.1"/>
    <property type="match status" value="1"/>
</dbReference>
<dbReference type="NCBIfam" id="NF009206">
    <property type="entry name" value="PRK12555.1"/>
    <property type="match status" value="1"/>
</dbReference>
<dbReference type="PANTHER" id="PTHR42872">
    <property type="entry name" value="PROTEIN-GLUTAMATE METHYLESTERASE/PROTEIN-GLUTAMINE GLUTAMINASE"/>
    <property type="match status" value="1"/>
</dbReference>
<dbReference type="PANTHER" id="PTHR42872:SF6">
    <property type="entry name" value="PROTEIN-GLUTAMATE METHYLESTERASE_PROTEIN-GLUTAMINE GLUTAMINASE"/>
    <property type="match status" value="1"/>
</dbReference>
<dbReference type="Pfam" id="PF01339">
    <property type="entry name" value="CheB_methylest"/>
    <property type="match status" value="1"/>
</dbReference>
<dbReference type="Pfam" id="PF00072">
    <property type="entry name" value="Response_reg"/>
    <property type="match status" value="1"/>
</dbReference>
<dbReference type="PIRSF" id="PIRSF000876">
    <property type="entry name" value="RR_chemtxs_CheB"/>
    <property type="match status" value="1"/>
</dbReference>
<dbReference type="SMART" id="SM00448">
    <property type="entry name" value="REC"/>
    <property type="match status" value="1"/>
</dbReference>
<dbReference type="SUPFAM" id="SSF52172">
    <property type="entry name" value="CheY-like"/>
    <property type="match status" value="1"/>
</dbReference>
<dbReference type="SUPFAM" id="SSF52738">
    <property type="entry name" value="Methylesterase CheB, C-terminal domain"/>
    <property type="match status" value="1"/>
</dbReference>
<dbReference type="PROSITE" id="PS50122">
    <property type="entry name" value="CHEB"/>
    <property type="match status" value="1"/>
</dbReference>
<dbReference type="PROSITE" id="PS50110">
    <property type="entry name" value="RESPONSE_REGULATORY"/>
    <property type="match status" value="1"/>
</dbReference>
<proteinExistence type="inferred from homology"/>
<reference key="1">
    <citation type="journal article" date="2004" name="Nat. Biotechnol.">
        <title>Complete genome sequence of the metabolically versatile photosynthetic bacterium Rhodopseudomonas palustris.</title>
        <authorList>
            <person name="Larimer F.W."/>
            <person name="Chain P."/>
            <person name="Hauser L."/>
            <person name="Lamerdin J.E."/>
            <person name="Malfatti S."/>
            <person name="Do L."/>
            <person name="Land M.L."/>
            <person name="Pelletier D.A."/>
            <person name="Beatty J.T."/>
            <person name="Lang A.S."/>
            <person name="Tabita F.R."/>
            <person name="Gibson J.L."/>
            <person name="Hanson T.E."/>
            <person name="Bobst C."/>
            <person name="Torres y Torres J.L."/>
            <person name="Peres C."/>
            <person name="Harrison F.H."/>
            <person name="Gibson J."/>
            <person name="Harwood C.S."/>
        </authorList>
    </citation>
    <scope>NUCLEOTIDE SEQUENCE [LARGE SCALE GENOMIC DNA]</scope>
    <source>
        <strain>ATCC BAA-98 / CGA009</strain>
    </source>
</reference>
<keyword id="KW-0145">Chemotaxis</keyword>
<keyword id="KW-0963">Cytoplasm</keyword>
<keyword id="KW-0378">Hydrolase</keyword>
<keyword id="KW-0597">Phosphoprotein</keyword>
<gene>
    <name evidence="1" type="primary">cheB3</name>
    <name type="synonym">cheB1</name>
    <name type="ordered locus">RPA0137</name>
</gene>
<name>CHEB3_RHOPA</name>
<accession>P62645</accession>
<accession>Q6NDH1</accession>